<organism>
    <name type="scientific">Kluyveromyces lactis (strain ATCC 8585 / CBS 2359 / DSM 70799 / NBRC 1267 / NRRL Y-1140 / WM37)</name>
    <name type="common">Yeast</name>
    <name type="synonym">Candida sphaerica</name>
    <dbReference type="NCBI Taxonomy" id="284590"/>
    <lineage>
        <taxon>Eukaryota</taxon>
        <taxon>Fungi</taxon>
        <taxon>Dikarya</taxon>
        <taxon>Ascomycota</taxon>
        <taxon>Saccharomycotina</taxon>
        <taxon>Saccharomycetes</taxon>
        <taxon>Saccharomycetales</taxon>
        <taxon>Saccharomycetaceae</taxon>
        <taxon>Kluyveromyces</taxon>
    </lineage>
</organism>
<accession>Q6CRV3</accession>
<proteinExistence type="inferred from homology"/>
<dbReference type="EC" id="2.3.1.225"/>
<dbReference type="EMBL" id="CR382124">
    <property type="protein sequence ID" value="CAH00432.1"/>
    <property type="molecule type" value="Genomic_DNA"/>
</dbReference>
<dbReference type="RefSeq" id="XP_453336.1">
    <property type="nucleotide sequence ID" value="XM_453336.1"/>
</dbReference>
<dbReference type="FunCoup" id="Q6CRV3">
    <property type="interactions" value="953"/>
</dbReference>
<dbReference type="STRING" id="284590.Q6CRV3"/>
<dbReference type="PaxDb" id="284590-Q6CRV3"/>
<dbReference type="KEGG" id="kla:KLLA0_D06149g"/>
<dbReference type="eggNOG" id="KOG1311">
    <property type="taxonomic scope" value="Eukaryota"/>
</dbReference>
<dbReference type="HOGENOM" id="CLU_064801_0_0_1"/>
<dbReference type="InParanoid" id="Q6CRV3"/>
<dbReference type="OMA" id="YCVWIGT"/>
<dbReference type="Proteomes" id="UP000000598">
    <property type="component" value="Chromosome D"/>
</dbReference>
<dbReference type="GO" id="GO:0005783">
    <property type="term" value="C:endoplasmic reticulum"/>
    <property type="evidence" value="ECO:0007669"/>
    <property type="project" value="TreeGrafter"/>
</dbReference>
<dbReference type="GO" id="GO:0005794">
    <property type="term" value="C:Golgi apparatus"/>
    <property type="evidence" value="ECO:0007669"/>
    <property type="project" value="TreeGrafter"/>
</dbReference>
<dbReference type="GO" id="GO:0016020">
    <property type="term" value="C:membrane"/>
    <property type="evidence" value="ECO:0007669"/>
    <property type="project" value="UniProtKB-SubCell"/>
</dbReference>
<dbReference type="GO" id="GO:0019706">
    <property type="term" value="F:protein-cysteine S-palmitoyltransferase activity"/>
    <property type="evidence" value="ECO:0007669"/>
    <property type="project" value="UniProtKB-EC"/>
</dbReference>
<dbReference type="GO" id="GO:0006612">
    <property type="term" value="P:protein targeting to membrane"/>
    <property type="evidence" value="ECO:0007669"/>
    <property type="project" value="TreeGrafter"/>
</dbReference>
<dbReference type="InterPro" id="IPR001594">
    <property type="entry name" value="Palmitoyltrfase_DHHC"/>
</dbReference>
<dbReference type="InterPro" id="IPR039859">
    <property type="entry name" value="PFA4/ZDH16/20/ERF2-like"/>
</dbReference>
<dbReference type="PANTHER" id="PTHR22883:SF23">
    <property type="entry name" value="PALMITOYLTRANSFERASE ZDHHC6"/>
    <property type="match status" value="1"/>
</dbReference>
<dbReference type="PANTHER" id="PTHR22883">
    <property type="entry name" value="ZINC FINGER DHHC DOMAIN CONTAINING PROTEIN"/>
    <property type="match status" value="1"/>
</dbReference>
<dbReference type="Pfam" id="PF01529">
    <property type="entry name" value="DHHC"/>
    <property type="match status" value="1"/>
</dbReference>
<dbReference type="PROSITE" id="PS50216">
    <property type="entry name" value="DHHC"/>
    <property type="match status" value="1"/>
</dbReference>
<keyword id="KW-0012">Acyltransferase</keyword>
<keyword id="KW-0449">Lipoprotein</keyword>
<keyword id="KW-0472">Membrane</keyword>
<keyword id="KW-0564">Palmitate</keyword>
<keyword id="KW-1185">Reference proteome</keyword>
<keyword id="KW-0808">Transferase</keyword>
<keyword id="KW-0812">Transmembrane</keyword>
<keyword id="KW-1133">Transmembrane helix</keyword>
<comment type="catalytic activity">
    <reaction>
        <text>L-cysteinyl-[protein] + hexadecanoyl-CoA = S-hexadecanoyl-L-cysteinyl-[protein] + CoA</text>
        <dbReference type="Rhea" id="RHEA:36683"/>
        <dbReference type="Rhea" id="RHEA-COMP:10131"/>
        <dbReference type="Rhea" id="RHEA-COMP:11032"/>
        <dbReference type="ChEBI" id="CHEBI:29950"/>
        <dbReference type="ChEBI" id="CHEBI:57287"/>
        <dbReference type="ChEBI" id="CHEBI:57379"/>
        <dbReference type="ChEBI" id="CHEBI:74151"/>
        <dbReference type="EC" id="2.3.1.225"/>
    </reaction>
</comment>
<comment type="subcellular location">
    <subcellularLocation>
        <location evidence="4">Membrane</location>
        <topology evidence="4">Multi-pass membrane protein</topology>
    </subcellularLocation>
</comment>
<comment type="domain">
    <text evidence="1">The DHHC domain is required for palmitoyltransferase activity.</text>
</comment>
<comment type="similarity">
    <text evidence="4">Belongs to the DHHC palmitoyltransferase family. PFA5 subfamily.</text>
</comment>
<name>PFA5_KLULA</name>
<reference key="1">
    <citation type="journal article" date="2004" name="Nature">
        <title>Genome evolution in yeasts.</title>
        <authorList>
            <person name="Dujon B."/>
            <person name="Sherman D."/>
            <person name="Fischer G."/>
            <person name="Durrens P."/>
            <person name="Casaregola S."/>
            <person name="Lafontaine I."/>
            <person name="de Montigny J."/>
            <person name="Marck C."/>
            <person name="Neuveglise C."/>
            <person name="Talla E."/>
            <person name="Goffard N."/>
            <person name="Frangeul L."/>
            <person name="Aigle M."/>
            <person name="Anthouard V."/>
            <person name="Babour A."/>
            <person name="Barbe V."/>
            <person name="Barnay S."/>
            <person name="Blanchin S."/>
            <person name="Beckerich J.-M."/>
            <person name="Beyne E."/>
            <person name="Bleykasten C."/>
            <person name="Boisrame A."/>
            <person name="Boyer J."/>
            <person name="Cattolico L."/>
            <person name="Confanioleri F."/>
            <person name="de Daruvar A."/>
            <person name="Despons L."/>
            <person name="Fabre E."/>
            <person name="Fairhead C."/>
            <person name="Ferry-Dumazet H."/>
            <person name="Groppi A."/>
            <person name="Hantraye F."/>
            <person name="Hennequin C."/>
            <person name="Jauniaux N."/>
            <person name="Joyet P."/>
            <person name="Kachouri R."/>
            <person name="Kerrest A."/>
            <person name="Koszul R."/>
            <person name="Lemaire M."/>
            <person name="Lesur I."/>
            <person name="Ma L."/>
            <person name="Muller H."/>
            <person name="Nicaud J.-M."/>
            <person name="Nikolski M."/>
            <person name="Oztas S."/>
            <person name="Ozier-Kalogeropoulos O."/>
            <person name="Pellenz S."/>
            <person name="Potier S."/>
            <person name="Richard G.-F."/>
            <person name="Straub M.-L."/>
            <person name="Suleau A."/>
            <person name="Swennen D."/>
            <person name="Tekaia F."/>
            <person name="Wesolowski-Louvel M."/>
            <person name="Westhof E."/>
            <person name="Wirth B."/>
            <person name="Zeniou-Meyer M."/>
            <person name="Zivanovic Y."/>
            <person name="Bolotin-Fukuhara M."/>
            <person name="Thierry A."/>
            <person name="Bouchier C."/>
            <person name="Caudron B."/>
            <person name="Scarpelli C."/>
            <person name="Gaillardin C."/>
            <person name="Weissenbach J."/>
            <person name="Wincker P."/>
            <person name="Souciet J.-L."/>
        </authorList>
    </citation>
    <scope>NUCLEOTIDE SEQUENCE [LARGE SCALE GENOMIC DNA]</scope>
    <source>
        <strain>ATCC 8585 / CBS 2359 / DSM 70799 / NBRC 1267 / NRRL Y-1140 / WM37</strain>
    </source>
</reference>
<feature type="chain" id="PRO_0000212980" description="Palmitoyltransferase PFA5">
    <location>
        <begin position="1"/>
        <end position="349"/>
    </location>
</feature>
<feature type="transmembrane region" description="Helical" evidence="2">
    <location>
        <begin position="19"/>
        <end position="39"/>
    </location>
</feature>
<feature type="transmembrane region" description="Helical" evidence="2">
    <location>
        <begin position="57"/>
        <end position="77"/>
    </location>
</feature>
<feature type="transmembrane region" description="Helical" evidence="2">
    <location>
        <begin position="170"/>
        <end position="190"/>
    </location>
</feature>
<feature type="transmembrane region" description="Helical" evidence="2">
    <location>
        <begin position="204"/>
        <end position="224"/>
    </location>
</feature>
<feature type="domain" description="DHHC" evidence="3">
    <location>
        <begin position="126"/>
        <end position="176"/>
    </location>
</feature>
<feature type="active site" description="S-palmitoyl cysteine intermediate" evidence="1">
    <location>
        <position position="156"/>
    </location>
</feature>
<gene>
    <name type="primary">PFA5</name>
    <name type="ordered locus">KLLA0D06149g</name>
</gene>
<protein>
    <recommendedName>
        <fullName>Palmitoyltransferase PFA5</fullName>
        <ecNumber>2.3.1.225</ecNumber>
    </recommendedName>
    <alternativeName>
        <fullName>Protein fatty acyltransferase 5</fullName>
    </alternativeName>
</protein>
<evidence type="ECO:0000250" key="1"/>
<evidence type="ECO:0000255" key="2"/>
<evidence type="ECO:0000255" key="3">
    <source>
        <dbReference type="PROSITE-ProRule" id="PRU00067"/>
    </source>
</evidence>
<evidence type="ECO:0000305" key="4"/>
<sequence length="349" mass="40321">MAWSLGTLRVTSHPYFRLLIPFLTVLLQCYGVWAFCHQFCYLQLYQRRNAKGACIGLIIVVLSLTFLIWYIWALMLVLGPGRQPTIPPFKIIPDSEIRTVSSESAVPDNSIAPPDIYPCDERGYPIWCSNCQSLKMSRTHHSTKVGYCVPRFDHYCVWIGTVLGRLNYKLFVQFTFYLDLVVLILMISIATQMRQMKGSANGNVYAVFALACCALLMAGPLFLTHIYYMCYNRTSIEIIEVNNKAKASRKFFCIYNPCDGYRYVIQFCPGENQDFWNKGNILTNLKEFLGPNYLSWFIPSILTHKQSYGKSSANYYDLIGDCNEVMSEKFQKYMIDKIERKEYVTRLVV</sequence>